<dbReference type="EC" id="2.7.7.70"/>
<dbReference type="EMBL" id="BX640450">
    <property type="protein sequence ID" value="CAE34826.1"/>
    <property type="molecule type" value="Genomic_DNA"/>
</dbReference>
<dbReference type="SMR" id="Q7WF17"/>
<dbReference type="KEGG" id="bbr:BB4463"/>
<dbReference type="eggNOG" id="COG0615">
    <property type="taxonomic scope" value="Bacteria"/>
</dbReference>
<dbReference type="HOGENOM" id="CLU_034585_2_0_4"/>
<dbReference type="BRENDA" id="2.7.7.70">
    <property type="organism ID" value="227"/>
</dbReference>
<dbReference type="UniPathway" id="UPA00356">
    <property type="reaction ID" value="UER00439"/>
</dbReference>
<dbReference type="UniPathway" id="UPA00958"/>
<dbReference type="Proteomes" id="UP000001027">
    <property type="component" value="Chromosome"/>
</dbReference>
<dbReference type="GO" id="GO:0005524">
    <property type="term" value="F:ATP binding"/>
    <property type="evidence" value="ECO:0007669"/>
    <property type="project" value="UniProtKB-KW"/>
</dbReference>
<dbReference type="GO" id="GO:0033786">
    <property type="term" value="F:heptose-1-phosphate adenylyltransferase activity"/>
    <property type="evidence" value="ECO:0007669"/>
    <property type="project" value="RHEA"/>
</dbReference>
<dbReference type="GO" id="GO:0016773">
    <property type="term" value="F:phosphotransferase activity, alcohol group as acceptor"/>
    <property type="evidence" value="ECO:0007669"/>
    <property type="project" value="InterPro"/>
</dbReference>
<dbReference type="GO" id="GO:0097171">
    <property type="term" value="P:ADP-L-glycero-beta-D-manno-heptose biosynthetic process"/>
    <property type="evidence" value="ECO:0007669"/>
    <property type="project" value="UniProtKB-UniPathway"/>
</dbReference>
<dbReference type="GO" id="GO:0009244">
    <property type="term" value="P:lipopolysaccharide core region biosynthetic process"/>
    <property type="evidence" value="ECO:0007669"/>
    <property type="project" value="UniProtKB-UniPathway"/>
</dbReference>
<dbReference type="Gene3D" id="3.40.50.620">
    <property type="entry name" value="HUPs"/>
    <property type="match status" value="1"/>
</dbReference>
<dbReference type="InterPro" id="IPR050385">
    <property type="entry name" value="Archaeal_FAD_synthase"/>
</dbReference>
<dbReference type="InterPro" id="IPR004821">
    <property type="entry name" value="Cyt_trans-like"/>
</dbReference>
<dbReference type="InterPro" id="IPR011914">
    <property type="entry name" value="RfaE_dom_II"/>
</dbReference>
<dbReference type="InterPro" id="IPR014729">
    <property type="entry name" value="Rossmann-like_a/b/a_fold"/>
</dbReference>
<dbReference type="NCBIfam" id="TIGR00125">
    <property type="entry name" value="cyt_tran_rel"/>
    <property type="match status" value="1"/>
</dbReference>
<dbReference type="NCBIfam" id="TIGR02199">
    <property type="entry name" value="rfaE_dom_II"/>
    <property type="match status" value="1"/>
</dbReference>
<dbReference type="PANTHER" id="PTHR43793:SF2">
    <property type="entry name" value="BIFUNCTIONAL PROTEIN HLDE"/>
    <property type="match status" value="1"/>
</dbReference>
<dbReference type="PANTHER" id="PTHR43793">
    <property type="entry name" value="FAD SYNTHASE"/>
    <property type="match status" value="1"/>
</dbReference>
<dbReference type="Pfam" id="PF01467">
    <property type="entry name" value="CTP_transf_like"/>
    <property type="match status" value="1"/>
</dbReference>
<dbReference type="SUPFAM" id="SSF52374">
    <property type="entry name" value="Nucleotidylyl transferase"/>
    <property type="match status" value="1"/>
</dbReference>
<proteinExistence type="evidence at protein level"/>
<name>HEPPA_BORBR</name>
<organism>
    <name type="scientific">Bordetella bronchiseptica (strain ATCC BAA-588 / NCTC 13252 / RB50)</name>
    <name type="common">Alcaligenes bronchisepticus</name>
    <dbReference type="NCBI Taxonomy" id="257310"/>
    <lineage>
        <taxon>Bacteria</taxon>
        <taxon>Pseudomonadati</taxon>
        <taxon>Pseudomonadota</taxon>
        <taxon>Betaproteobacteria</taxon>
        <taxon>Burkholderiales</taxon>
        <taxon>Alcaligenaceae</taxon>
        <taxon>Bordetella</taxon>
    </lineage>
</organism>
<feature type="initiator methionine" description="Removed">
    <location>
        <position position="1"/>
    </location>
</feature>
<feature type="chain" id="PRO_0000424238" description="D-beta-D-heptose 1-phosphate adenylyltransferase">
    <location>
        <begin position="2"/>
        <end position="162"/>
    </location>
</feature>
<keyword id="KW-0067">ATP-binding</keyword>
<keyword id="KW-0119">Carbohydrate metabolism</keyword>
<keyword id="KW-0448">Lipopolysaccharide biosynthesis</keyword>
<keyword id="KW-0547">Nucleotide-binding</keyword>
<keyword id="KW-0548">Nucleotidyltransferase</keyword>
<keyword id="KW-0808">Transferase</keyword>
<protein>
    <recommendedName>
        <fullName>D-beta-D-heptose 1-phosphate adenylyltransferase</fullName>
        <ecNumber>2.7.7.70</ecNumber>
    </recommendedName>
    <alternativeName>
        <fullName>D-glycero-beta-D-manno-heptose 1-phosphate adenylyltransferase</fullName>
    </alternativeName>
</protein>
<accession>Q7WF17</accession>
<sequence length="162" mass="17440">MSSARFESKILSRAELVAAVAAGRLPRPLVFTNGVFDILHRGHVTYLDQAAQLGATLVVAVNTDESVRRLGKGSDRPLNQVQDRAALLAALGCVDAVTSFHEDTPQELIGELRPDLIVKGGDYDMDTLPETALVKSWGGRAVAIPFDFERSTTALLGKIRQG</sequence>
<comment type="function">
    <text evidence="1">Catalyzes the ADP transfer from ATP to D-glycero-beta-D-manno-heptose 1-phosphate, yielding ADP-D-glycero-beta-D-manno-heptose. Cannot use GTP, UTP, or CTP as substrate. Is not active against the alpha-anomer substrate. Is also able to catalyze the ADP transfer to beta-glucose 1-phosphate in vitro, yielding ADP-beta-glucose.</text>
</comment>
<comment type="catalytic activity">
    <reaction evidence="1">
        <text>D-glycero-beta-D-manno-heptose 1-phosphate + ATP + H(+) = ADP-D-glycero-beta-D-manno-heptose + diphosphate</text>
        <dbReference type="Rhea" id="RHEA:27465"/>
        <dbReference type="ChEBI" id="CHEBI:15378"/>
        <dbReference type="ChEBI" id="CHEBI:30616"/>
        <dbReference type="ChEBI" id="CHEBI:33019"/>
        <dbReference type="ChEBI" id="CHEBI:59967"/>
        <dbReference type="ChEBI" id="CHEBI:61593"/>
        <dbReference type="EC" id="2.7.7.70"/>
    </reaction>
</comment>
<comment type="pathway">
    <text evidence="1">Nucleotide-sugar biosynthesis; ADP-L-glycero-beta-D-manno-heptose biosynthesis; ADP-L-glycero-beta-D-manno-heptose from D-glycero-beta-D-manno-heptose 7-phosphate: step 3/4.</text>
</comment>
<comment type="pathway">
    <text evidence="1">Bacterial outer membrane biogenesis; LPS core biosynthesis.</text>
</comment>
<comment type="mass spectrometry" mass="17322.0" method="Electrospray" evidence="1"/>
<comment type="similarity">
    <text evidence="2">Belongs to the cytidylyltransferase family.</text>
</comment>
<reference key="1">
    <citation type="journal article" date="2003" name="Nat. Genet.">
        <title>Comparative analysis of the genome sequences of Bordetella pertussis, Bordetella parapertussis and Bordetella bronchiseptica.</title>
        <authorList>
            <person name="Parkhill J."/>
            <person name="Sebaihia M."/>
            <person name="Preston A."/>
            <person name="Murphy L.D."/>
            <person name="Thomson N.R."/>
            <person name="Harris D.E."/>
            <person name="Holden M.T.G."/>
            <person name="Churcher C.M."/>
            <person name="Bentley S.D."/>
            <person name="Mungall K.L."/>
            <person name="Cerdeno-Tarraga A.-M."/>
            <person name="Temple L."/>
            <person name="James K.D."/>
            <person name="Harris B."/>
            <person name="Quail M.A."/>
            <person name="Achtman M."/>
            <person name="Atkin R."/>
            <person name="Baker S."/>
            <person name="Basham D."/>
            <person name="Bason N."/>
            <person name="Cherevach I."/>
            <person name="Chillingworth T."/>
            <person name="Collins M."/>
            <person name="Cronin A."/>
            <person name="Davis P."/>
            <person name="Doggett J."/>
            <person name="Feltwell T."/>
            <person name="Goble A."/>
            <person name="Hamlin N."/>
            <person name="Hauser H."/>
            <person name="Holroyd S."/>
            <person name="Jagels K."/>
            <person name="Leather S."/>
            <person name="Moule S."/>
            <person name="Norberczak H."/>
            <person name="O'Neil S."/>
            <person name="Ormond D."/>
            <person name="Price C."/>
            <person name="Rabbinowitsch E."/>
            <person name="Rutter S."/>
            <person name="Sanders M."/>
            <person name="Saunders D."/>
            <person name="Seeger K."/>
            <person name="Sharp S."/>
            <person name="Simmonds M."/>
            <person name="Skelton J."/>
            <person name="Squares R."/>
            <person name="Squares S."/>
            <person name="Stevens K."/>
            <person name="Unwin L."/>
            <person name="Whitehead S."/>
            <person name="Barrell B.G."/>
            <person name="Maskell D.J."/>
        </authorList>
    </citation>
    <scope>NUCLEOTIDE SEQUENCE [LARGE SCALE GENOMIC DNA]</scope>
    <source>
        <strain>ATCC BAA-588 / NCTC 13252 / RB50</strain>
    </source>
</reference>
<reference key="2">
    <citation type="journal article" date="2010" name="Biochemistry">
        <title>Divergence of biochemical function in the HAD superfamily: D-glycero-D-manno-heptose-1,7-bisphosphate phosphatase (GmhB).</title>
        <authorList>
            <person name="Wang L."/>
            <person name="Huang H."/>
            <person name="Nguyen H.H."/>
            <person name="Allen K.N."/>
            <person name="Mariano P.S."/>
            <person name="Dunaway-Mariano D."/>
        </authorList>
    </citation>
    <scope>FUNCTION</scope>
    <scope>CATALYTIC ACTIVITY</scope>
    <scope>SUBSTRATE SPECIFICITY</scope>
    <scope>MASS SPECTROMETRY</scope>
    <scope>PATHWAY</scope>
</reference>
<evidence type="ECO:0000269" key="1">
    <source>
    </source>
</evidence>
<evidence type="ECO:0000305" key="2"/>
<gene>
    <name type="ordered locus">BB4463</name>
</gene>